<comment type="function">
    <text evidence="1">Produces ATP from ADP in the presence of a proton gradient across the membrane.</text>
</comment>
<comment type="subunit">
    <text>F-type ATPases have 2 components, CF(1) - the catalytic core - and CF(0) - the membrane proton channel. CF(1) has five subunits: alpha(3), beta(3), gamma(1), delta(1), epsilon(1). CF(0) has three main subunits: a, b and c.</text>
</comment>
<comment type="subcellular location">
    <subcellularLocation>
        <location evidence="1">Cell membrane</location>
        <topology evidence="1">Peripheral membrane protein</topology>
    </subcellularLocation>
</comment>
<comment type="similarity">
    <text evidence="1">Belongs to the ATPase epsilon chain family.</text>
</comment>
<evidence type="ECO:0000255" key="1">
    <source>
        <dbReference type="HAMAP-Rule" id="MF_00530"/>
    </source>
</evidence>
<proteinExistence type="inferred from homology"/>
<organism>
    <name type="scientific">Listeria innocua serovar 6a (strain ATCC BAA-680 / CLIP 11262)</name>
    <dbReference type="NCBI Taxonomy" id="272626"/>
    <lineage>
        <taxon>Bacteria</taxon>
        <taxon>Bacillati</taxon>
        <taxon>Bacillota</taxon>
        <taxon>Bacilli</taxon>
        <taxon>Bacillales</taxon>
        <taxon>Listeriaceae</taxon>
        <taxon>Listeria</taxon>
    </lineage>
</organism>
<accession>Q927W5</accession>
<sequence>MGSLNVSIVTPDGPVYEGVAQMVIARTKAGELGILPGHVPLVAPLKIDIVRLKVESGEEWVAVNGGFMEVNGEEVNILADTAEREQDIDIDRAEKAKQRAEEELSRAKEQKVDEVMARLALQRAINRIHAKEHN</sequence>
<gene>
    <name evidence="1" type="primary">atpC</name>
    <name type="ordered locus">lin2672</name>
</gene>
<reference key="1">
    <citation type="journal article" date="2001" name="Science">
        <title>Comparative genomics of Listeria species.</title>
        <authorList>
            <person name="Glaser P."/>
            <person name="Frangeul L."/>
            <person name="Buchrieser C."/>
            <person name="Rusniok C."/>
            <person name="Amend A."/>
            <person name="Baquero F."/>
            <person name="Berche P."/>
            <person name="Bloecker H."/>
            <person name="Brandt P."/>
            <person name="Chakraborty T."/>
            <person name="Charbit A."/>
            <person name="Chetouani F."/>
            <person name="Couve E."/>
            <person name="de Daruvar A."/>
            <person name="Dehoux P."/>
            <person name="Domann E."/>
            <person name="Dominguez-Bernal G."/>
            <person name="Duchaud E."/>
            <person name="Durant L."/>
            <person name="Dussurget O."/>
            <person name="Entian K.-D."/>
            <person name="Fsihi H."/>
            <person name="Garcia-del Portillo F."/>
            <person name="Garrido P."/>
            <person name="Gautier L."/>
            <person name="Goebel W."/>
            <person name="Gomez-Lopez N."/>
            <person name="Hain T."/>
            <person name="Hauf J."/>
            <person name="Jackson D."/>
            <person name="Jones L.-M."/>
            <person name="Kaerst U."/>
            <person name="Kreft J."/>
            <person name="Kuhn M."/>
            <person name="Kunst F."/>
            <person name="Kurapkat G."/>
            <person name="Madueno E."/>
            <person name="Maitournam A."/>
            <person name="Mata Vicente J."/>
            <person name="Ng E."/>
            <person name="Nedjari H."/>
            <person name="Nordsiek G."/>
            <person name="Novella S."/>
            <person name="de Pablos B."/>
            <person name="Perez-Diaz J.-C."/>
            <person name="Purcell R."/>
            <person name="Remmel B."/>
            <person name="Rose M."/>
            <person name="Schlueter T."/>
            <person name="Simoes N."/>
            <person name="Tierrez A."/>
            <person name="Vazquez-Boland J.-A."/>
            <person name="Voss H."/>
            <person name="Wehland J."/>
            <person name="Cossart P."/>
        </authorList>
    </citation>
    <scope>NUCLEOTIDE SEQUENCE [LARGE SCALE GENOMIC DNA]</scope>
    <source>
        <strain>ATCC BAA-680 / CLIP 11262</strain>
    </source>
</reference>
<dbReference type="EMBL" id="AL596173">
    <property type="protein sequence ID" value="CAC97898.1"/>
    <property type="molecule type" value="Genomic_DNA"/>
</dbReference>
<dbReference type="PIR" id="AB1766">
    <property type="entry name" value="AB1766"/>
</dbReference>
<dbReference type="RefSeq" id="WP_003772297.1">
    <property type="nucleotide sequence ID" value="NC_003212.1"/>
</dbReference>
<dbReference type="SMR" id="Q927W5"/>
<dbReference type="STRING" id="272626.gene:17567052"/>
<dbReference type="GeneID" id="93235935"/>
<dbReference type="KEGG" id="lin:atpC"/>
<dbReference type="eggNOG" id="COG0355">
    <property type="taxonomic scope" value="Bacteria"/>
</dbReference>
<dbReference type="HOGENOM" id="CLU_084338_1_0_9"/>
<dbReference type="OrthoDB" id="9804110at2"/>
<dbReference type="Proteomes" id="UP000002513">
    <property type="component" value="Chromosome"/>
</dbReference>
<dbReference type="GO" id="GO:0005886">
    <property type="term" value="C:plasma membrane"/>
    <property type="evidence" value="ECO:0007669"/>
    <property type="project" value="UniProtKB-SubCell"/>
</dbReference>
<dbReference type="GO" id="GO:0045259">
    <property type="term" value="C:proton-transporting ATP synthase complex"/>
    <property type="evidence" value="ECO:0007669"/>
    <property type="project" value="UniProtKB-KW"/>
</dbReference>
<dbReference type="GO" id="GO:0005524">
    <property type="term" value="F:ATP binding"/>
    <property type="evidence" value="ECO:0007669"/>
    <property type="project" value="UniProtKB-UniRule"/>
</dbReference>
<dbReference type="GO" id="GO:0046933">
    <property type="term" value="F:proton-transporting ATP synthase activity, rotational mechanism"/>
    <property type="evidence" value="ECO:0007669"/>
    <property type="project" value="UniProtKB-UniRule"/>
</dbReference>
<dbReference type="CDD" id="cd12152">
    <property type="entry name" value="F1-ATPase_delta"/>
    <property type="match status" value="1"/>
</dbReference>
<dbReference type="FunFam" id="1.20.5.440:FF:000001">
    <property type="entry name" value="ATP synthase epsilon chain"/>
    <property type="match status" value="1"/>
</dbReference>
<dbReference type="FunFam" id="2.60.15.10:FF:000001">
    <property type="entry name" value="ATP synthase epsilon chain"/>
    <property type="match status" value="1"/>
</dbReference>
<dbReference type="Gene3D" id="1.20.5.440">
    <property type="entry name" value="ATP synthase delta/epsilon subunit, C-terminal domain"/>
    <property type="match status" value="1"/>
</dbReference>
<dbReference type="Gene3D" id="2.60.15.10">
    <property type="entry name" value="F0F1 ATP synthase delta/epsilon subunit, N-terminal"/>
    <property type="match status" value="1"/>
</dbReference>
<dbReference type="HAMAP" id="MF_00530">
    <property type="entry name" value="ATP_synth_epsil_bac"/>
    <property type="match status" value="1"/>
</dbReference>
<dbReference type="InterPro" id="IPR036794">
    <property type="entry name" value="ATP_F1_dsu/esu_C_sf"/>
</dbReference>
<dbReference type="InterPro" id="IPR001469">
    <property type="entry name" value="ATP_synth_F1_dsu/esu"/>
</dbReference>
<dbReference type="InterPro" id="IPR020546">
    <property type="entry name" value="ATP_synth_F1_dsu/esu_N"/>
</dbReference>
<dbReference type="InterPro" id="IPR020547">
    <property type="entry name" value="ATP_synth_F1_esu_C"/>
</dbReference>
<dbReference type="InterPro" id="IPR036771">
    <property type="entry name" value="ATPsynth_dsu/esu_N"/>
</dbReference>
<dbReference type="NCBIfam" id="TIGR01216">
    <property type="entry name" value="ATP_synt_epsi"/>
    <property type="match status" value="1"/>
</dbReference>
<dbReference type="NCBIfam" id="NF001846">
    <property type="entry name" value="PRK00571.1-3"/>
    <property type="match status" value="1"/>
</dbReference>
<dbReference type="NCBIfam" id="NF009977">
    <property type="entry name" value="PRK13442.1"/>
    <property type="match status" value="1"/>
</dbReference>
<dbReference type="PANTHER" id="PTHR13822">
    <property type="entry name" value="ATP SYNTHASE DELTA/EPSILON CHAIN"/>
    <property type="match status" value="1"/>
</dbReference>
<dbReference type="PANTHER" id="PTHR13822:SF10">
    <property type="entry name" value="ATP SYNTHASE EPSILON CHAIN, CHLOROPLASTIC"/>
    <property type="match status" value="1"/>
</dbReference>
<dbReference type="Pfam" id="PF00401">
    <property type="entry name" value="ATP-synt_DE"/>
    <property type="match status" value="1"/>
</dbReference>
<dbReference type="Pfam" id="PF02823">
    <property type="entry name" value="ATP-synt_DE_N"/>
    <property type="match status" value="1"/>
</dbReference>
<dbReference type="SUPFAM" id="SSF46604">
    <property type="entry name" value="Epsilon subunit of F1F0-ATP synthase C-terminal domain"/>
    <property type="match status" value="1"/>
</dbReference>
<dbReference type="SUPFAM" id="SSF51344">
    <property type="entry name" value="Epsilon subunit of F1F0-ATP synthase N-terminal domain"/>
    <property type="match status" value="1"/>
</dbReference>
<name>ATPE_LISIN</name>
<protein>
    <recommendedName>
        <fullName evidence="1">ATP synthase epsilon chain</fullName>
    </recommendedName>
    <alternativeName>
        <fullName evidence="1">ATP synthase F1 sector epsilon subunit</fullName>
    </alternativeName>
    <alternativeName>
        <fullName evidence="1">F-ATPase epsilon subunit</fullName>
    </alternativeName>
</protein>
<keyword id="KW-0066">ATP synthesis</keyword>
<keyword id="KW-1003">Cell membrane</keyword>
<keyword id="KW-0139">CF(1)</keyword>
<keyword id="KW-0375">Hydrogen ion transport</keyword>
<keyword id="KW-0406">Ion transport</keyword>
<keyword id="KW-0472">Membrane</keyword>
<keyword id="KW-0813">Transport</keyword>
<feature type="chain" id="PRO_0000188152" description="ATP synthase epsilon chain">
    <location>
        <begin position="1"/>
        <end position="134"/>
    </location>
</feature>